<reference key="1">
    <citation type="journal article" date="2005" name="Genome Res.">
        <title>Genome sequence of Blochmannia pennsylvanicus indicates parallel evolutionary trends among bacterial mutualists of insects.</title>
        <authorList>
            <person name="Degnan P.H."/>
            <person name="Lazarus A.B."/>
            <person name="Wernegreen J.J."/>
        </authorList>
    </citation>
    <scope>NUCLEOTIDE SEQUENCE [LARGE SCALE GENOMIC DNA]</scope>
    <source>
        <strain>BPEN</strain>
    </source>
</reference>
<dbReference type="EC" id="5.4.2.11" evidence="1"/>
<dbReference type="EMBL" id="CP000016">
    <property type="protein sequence ID" value="AAZ40977.1"/>
    <property type="molecule type" value="Genomic_DNA"/>
</dbReference>
<dbReference type="RefSeq" id="WP_011282886.1">
    <property type="nucleotide sequence ID" value="NC_007292.1"/>
</dbReference>
<dbReference type="SMR" id="Q492W5"/>
<dbReference type="STRING" id="291272.BPEN_352"/>
<dbReference type="KEGG" id="bpn:BPEN_352"/>
<dbReference type="eggNOG" id="COG0588">
    <property type="taxonomic scope" value="Bacteria"/>
</dbReference>
<dbReference type="HOGENOM" id="CLU_033323_1_1_6"/>
<dbReference type="OrthoDB" id="9781415at2"/>
<dbReference type="UniPathway" id="UPA00109">
    <property type="reaction ID" value="UER00186"/>
</dbReference>
<dbReference type="Proteomes" id="UP000007794">
    <property type="component" value="Chromosome"/>
</dbReference>
<dbReference type="GO" id="GO:0004619">
    <property type="term" value="F:phosphoglycerate mutase activity"/>
    <property type="evidence" value="ECO:0007669"/>
    <property type="project" value="UniProtKB-EC"/>
</dbReference>
<dbReference type="GO" id="GO:0006094">
    <property type="term" value="P:gluconeogenesis"/>
    <property type="evidence" value="ECO:0007669"/>
    <property type="project" value="UniProtKB-UniRule"/>
</dbReference>
<dbReference type="GO" id="GO:0006096">
    <property type="term" value="P:glycolytic process"/>
    <property type="evidence" value="ECO:0007669"/>
    <property type="project" value="UniProtKB-UniRule"/>
</dbReference>
<dbReference type="CDD" id="cd07067">
    <property type="entry name" value="HP_PGM_like"/>
    <property type="match status" value="1"/>
</dbReference>
<dbReference type="FunFam" id="3.40.50.1240:FF:000003">
    <property type="entry name" value="2,3-bisphosphoglycerate-dependent phosphoglycerate mutase"/>
    <property type="match status" value="1"/>
</dbReference>
<dbReference type="Gene3D" id="3.40.50.1240">
    <property type="entry name" value="Phosphoglycerate mutase-like"/>
    <property type="match status" value="1"/>
</dbReference>
<dbReference type="HAMAP" id="MF_01039">
    <property type="entry name" value="PGAM_GpmA"/>
    <property type="match status" value="1"/>
</dbReference>
<dbReference type="InterPro" id="IPR013078">
    <property type="entry name" value="His_Pase_superF_clade-1"/>
</dbReference>
<dbReference type="InterPro" id="IPR029033">
    <property type="entry name" value="His_PPase_superfam"/>
</dbReference>
<dbReference type="InterPro" id="IPR001345">
    <property type="entry name" value="PG/BPGM_mutase_AS"/>
</dbReference>
<dbReference type="InterPro" id="IPR005952">
    <property type="entry name" value="Phosphogly_mut1"/>
</dbReference>
<dbReference type="NCBIfam" id="TIGR01258">
    <property type="entry name" value="pgm_1"/>
    <property type="match status" value="1"/>
</dbReference>
<dbReference type="NCBIfam" id="NF010713">
    <property type="entry name" value="PRK14115.1"/>
    <property type="match status" value="1"/>
</dbReference>
<dbReference type="PANTHER" id="PTHR11931">
    <property type="entry name" value="PHOSPHOGLYCERATE MUTASE"/>
    <property type="match status" value="1"/>
</dbReference>
<dbReference type="Pfam" id="PF00300">
    <property type="entry name" value="His_Phos_1"/>
    <property type="match status" value="2"/>
</dbReference>
<dbReference type="PIRSF" id="PIRSF000709">
    <property type="entry name" value="6PFK_2-Ptase"/>
    <property type="match status" value="1"/>
</dbReference>
<dbReference type="SMART" id="SM00855">
    <property type="entry name" value="PGAM"/>
    <property type="match status" value="1"/>
</dbReference>
<dbReference type="SUPFAM" id="SSF53254">
    <property type="entry name" value="Phosphoglycerate mutase-like"/>
    <property type="match status" value="1"/>
</dbReference>
<dbReference type="PROSITE" id="PS00175">
    <property type="entry name" value="PG_MUTASE"/>
    <property type="match status" value="1"/>
</dbReference>
<protein>
    <recommendedName>
        <fullName evidence="1">2,3-bisphosphoglycerate-dependent phosphoglycerate mutase</fullName>
        <shortName evidence="1">BPG-dependent PGAM</shortName>
        <shortName evidence="1">PGAM</shortName>
        <shortName evidence="1">Phosphoglyceromutase</shortName>
        <shortName evidence="1">dPGM</shortName>
        <ecNumber evidence="1">5.4.2.11</ecNumber>
    </recommendedName>
</protein>
<sequence length="232" mass="26998">MHITKLVLIRHGESQWNKENRFTGWVDVDLSEKGRSEAQCAGRILKKNGFFFNYGYTSVLKRAIHTLWIILDQLDQAWLPIEKSWRLNERHYGALQGLNKDEAIKEYGYKTIQKWRRSFNVIPPNICGGNNQFIATNDNRYANISTDELPSSESLELTLKRVIPYWNQSIIPHIKKGQTIIIVAHGNSIRAIIKFLNHLNESEIFQINVPTGVPLIYEFDKKANTVQHYYLK</sequence>
<organism>
    <name type="scientific">Blochmanniella pennsylvanica (strain BPEN)</name>
    <dbReference type="NCBI Taxonomy" id="291272"/>
    <lineage>
        <taxon>Bacteria</taxon>
        <taxon>Pseudomonadati</taxon>
        <taxon>Pseudomonadota</taxon>
        <taxon>Gammaproteobacteria</taxon>
        <taxon>Enterobacterales</taxon>
        <taxon>Enterobacteriaceae</taxon>
        <taxon>ant endosymbionts</taxon>
        <taxon>Candidatus Blochmanniella</taxon>
    </lineage>
</organism>
<name>GPMA_BLOPB</name>
<feature type="chain" id="PRO_0000229107" description="2,3-bisphosphoglycerate-dependent phosphoglycerate mutase">
    <location>
        <begin position="1"/>
        <end position="232"/>
    </location>
</feature>
<feature type="active site" description="Tele-phosphohistidine intermediate" evidence="1">
    <location>
        <position position="11"/>
    </location>
</feature>
<feature type="active site" description="Proton donor/acceptor" evidence="1">
    <location>
        <position position="89"/>
    </location>
</feature>
<feature type="binding site" evidence="1">
    <location>
        <begin position="10"/>
        <end position="17"/>
    </location>
    <ligand>
        <name>substrate</name>
    </ligand>
</feature>
<feature type="binding site" evidence="1">
    <location>
        <begin position="23"/>
        <end position="24"/>
    </location>
    <ligand>
        <name>substrate</name>
    </ligand>
</feature>
<feature type="binding site" evidence="1">
    <location>
        <position position="62"/>
    </location>
    <ligand>
        <name>substrate</name>
    </ligand>
</feature>
<feature type="binding site" evidence="1">
    <location>
        <begin position="89"/>
        <end position="92"/>
    </location>
    <ligand>
        <name>substrate</name>
    </ligand>
</feature>
<feature type="binding site" evidence="1">
    <location>
        <position position="100"/>
    </location>
    <ligand>
        <name>substrate</name>
    </ligand>
</feature>
<feature type="binding site" evidence="1">
    <location>
        <begin position="116"/>
        <end position="117"/>
    </location>
    <ligand>
        <name>substrate</name>
    </ligand>
</feature>
<feature type="binding site" evidence="1">
    <location>
        <begin position="186"/>
        <end position="187"/>
    </location>
    <ligand>
        <name>substrate</name>
    </ligand>
</feature>
<feature type="site" description="Transition state stabilizer" evidence="1">
    <location>
        <position position="185"/>
    </location>
</feature>
<gene>
    <name evidence="1" type="primary">gpmA</name>
    <name type="ordered locus">BPEN_352</name>
</gene>
<evidence type="ECO:0000255" key="1">
    <source>
        <dbReference type="HAMAP-Rule" id="MF_01039"/>
    </source>
</evidence>
<proteinExistence type="inferred from homology"/>
<keyword id="KW-0312">Gluconeogenesis</keyword>
<keyword id="KW-0324">Glycolysis</keyword>
<keyword id="KW-0413">Isomerase</keyword>
<keyword id="KW-1185">Reference proteome</keyword>
<comment type="function">
    <text evidence="1">Catalyzes the interconversion of 2-phosphoglycerate and 3-phosphoglycerate.</text>
</comment>
<comment type="catalytic activity">
    <reaction evidence="1">
        <text>(2R)-2-phosphoglycerate = (2R)-3-phosphoglycerate</text>
        <dbReference type="Rhea" id="RHEA:15901"/>
        <dbReference type="ChEBI" id="CHEBI:58272"/>
        <dbReference type="ChEBI" id="CHEBI:58289"/>
        <dbReference type="EC" id="5.4.2.11"/>
    </reaction>
</comment>
<comment type="pathway">
    <text evidence="1">Carbohydrate degradation; glycolysis; pyruvate from D-glyceraldehyde 3-phosphate: step 3/5.</text>
</comment>
<comment type="subunit">
    <text evidence="1">Homodimer.</text>
</comment>
<comment type="similarity">
    <text evidence="1">Belongs to the phosphoglycerate mutase family. BPG-dependent PGAM subfamily.</text>
</comment>
<accession>Q492W5</accession>